<geneLocation type="mitochondrion"/>
<proteinExistence type="inferred from homology"/>
<reference key="1">
    <citation type="journal article" date="2001" name="Proc. R. Soc. B">
        <title>The mitochondrial genomes of the iguana (Iguana iguana) and the caiman (Caiman crocodylus): implications for amniote phylogeny.</title>
        <authorList>
            <person name="Janke A."/>
            <person name="Erpenbeck D."/>
            <person name="Nilsson M."/>
            <person name="Arnason U."/>
        </authorList>
    </citation>
    <scope>NUCLEOTIDE SEQUENCE [GENOMIC DNA]</scope>
</reference>
<accession>Q956S6</accession>
<feature type="chain" id="PRO_0000061062" description="Cytochrome b">
    <location>
        <begin position="1"/>
        <end position="379"/>
    </location>
</feature>
<feature type="transmembrane region" description="Helical" evidence="2">
    <location>
        <begin position="33"/>
        <end position="53"/>
    </location>
</feature>
<feature type="transmembrane region" description="Helical" evidence="2">
    <location>
        <begin position="77"/>
        <end position="98"/>
    </location>
</feature>
<feature type="transmembrane region" description="Helical" evidence="2">
    <location>
        <begin position="113"/>
        <end position="133"/>
    </location>
</feature>
<feature type="transmembrane region" description="Helical" evidence="2">
    <location>
        <begin position="178"/>
        <end position="198"/>
    </location>
</feature>
<feature type="transmembrane region" description="Helical" evidence="2">
    <location>
        <begin position="226"/>
        <end position="246"/>
    </location>
</feature>
<feature type="transmembrane region" description="Helical" evidence="2">
    <location>
        <begin position="288"/>
        <end position="308"/>
    </location>
</feature>
<feature type="transmembrane region" description="Helical" evidence="2">
    <location>
        <begin position="320"/>
        <end position="340"/>
    </location>
</feature>
<feature type="transmembrane region" description="Helical" evidence="2">
    <location>
        <begin position="347"/>
        <end position="367"/>
    </location>
</feature>
<feature type="binding site" description="axial binding residue" evidence="2">
    <location>
        <position position="83"/>
    </location>
    <ligand>
        <name>heme b</name>
        <dbReference type="ChEBI" id="CHEBI:60344"/>
        <label>b562</label>
    </ligand>
    <ligandPart>
        <name>Fe</name>
        <dbReference type="ChEBI" id="CHEBI:18248"/>
    </ligandPart>
</feature>
<feature type="binding site" description="axial binding residue" evidence="2">
    <location>
        <position position="97"/>
    </location>
    <ligand>
        <name>heme b</name>
        <dbReference type="ChEBI" id="CHEBI:60344"/>
        <label>b566</label>
    </ligand>
    <ligandPart>
        <name>Fe</name>
        <dbReference type="ChEBI" id="CHEBI:18248"/>
    </ligandPart>
</feature>
<feature type="binding site" description="axial binding residue" evidence="2">
    <location>
        <position position="182"/>
    </location>
    <ligand>
        <name>heme b</name>
        <dbReference type="ChEBI" id="CHEBI:60344"/>
        <label>b562</label>
    </ligand>
    <ligandPart>
        <name>Fe</name>
        <dbReference type="ChEBI" id="CHEBI:18248"/>
    </ligandPart>
</feature>
<feature type="binding site" description="axial binding residue" evidence="2">
    <location>
        <position position="196"/>
    </location>
    <ligand>
        <name>heme b</name>
        <dbReference type="ChEBI" id="CHEBI:60344"/>
        <label>b566</label>
    </ligand>
    <ligandPart>
        <name>Fe</name>
        <dbReference type="ChEBI" id="CHEBI:18248"/>
    </ligandPart>
</feature>
<feature type="binding site" evidence="2">
    <location>
        <position position="201"/>
    </location>
    <ligand>
        <name>a ubiquinone</name>
        <dbReference type="ChEBI" id="CHEBI:16389"/>
    </ligand>
</feature>
<organism>
    <name type="scientific">Iguana iguana</name>
    <name type="common">Common iguana</name>
    <dbReference type="NCBI Taxonomy" id="8517"/>
    <lineage>
        <taxon>Eukaryota</taxon>
        <taxon>Metazoa</taxon>
        <taxon>Chordata</taxon>
        <taxon>Craniata</taxon>
        <taxon>Vertebrata</taxon>
        <taxon>Euteleostomi</taxon>
        <taxon>Lepidosauria</taxon>
        <taxon>Squamata</taxon>
        <taxon>Bifurcata</taxon>
        <taxon>Unidentata</taxon>
        <taxon>Episquamata</taxon>
        <taxon>Toxicofera</taxon>
        <taxon>Iguania</taxon>
        <taxon>Iguanidae</taxon>
        <taxon>Iguaninae</taxon>
        <taxon>Iguana</taxon>
    </lineage>
</organism>
<keyword id="KW-0249">Electron transport</keyword>
<keyword id="KW-0349">Heme</keyword>
<keyword id="KW-0408">Iron</keyword>
<keyword id="KW-0472">Membrane</keyword>
<keyword id="KW-0479">Metal-binding</keyword>
<keyword id="KW-0496">Mitochondrion</keyword>
<keyword id="KW-0999">Mitochondrion inner membrane</keyword>
<keyword id="KW-0679">Respiratory chain</keyword>
<keyword id="KW-0812">Transmembrane</keyword>
<keyword id="KW-1133">Transmembrane helix</keyword>
<keyword id="KW-0813">Transport</keyword>
<keyword id="KW-0830">Ubiquinone</keyword>
<sequence>MTVMRKSHPILKIFNNSFIDLPTPSNISAWWNFGSLLGLCLIVQTLTGLFLAMHYTADISLAFSSVAHICRDVQYGWLIRNLHANGASMFFICLYLHIGRGLYYGSYLFKETWNIGVVLLLLVMAAAFVGYVLPWGQMSFWGATVITNLLSAIPYVGATLVEWVWGGFSVDNATLTRFFTFHFLLPFTIIALTMLHLLFLHETGSNNPTGLNSNPDKIPFHPYFSYKDLLGATLMITTLLTLVLFSPNLLGDPENFTPANPLITPPHIKPEWYFLFAYAILRSIPNKLGGVLALLFSILILMIVPLLHLSKQRSTTFRPFSQTLFWLLISNVLILTWIGGQPVEHPFIIIGQLASVTYFTLFLVVMPTTALLENKLLNW</sequence>
<evidence type="ECO:0000250" key="1"/>
<evidence type="ECO:0000250" key="2">
    <source>
        <dbReference type="UniProtKB" id="P00157"/>
    </source>
</evidence>
<evidence type="ECO:0000255" key="3">
    <source>
        <dbReference type="PROSITE-ProRule" id="PRU00967"/>
    </source>
</evidence>
<evidence type="ECO:0000255" key="4">
    <source>
        <dbReference type="PROSITE-ProRule" id="PRU00968"/>
    </source>
</evidence>
<dbReference type="EMBL" id="AJ278511">
    <property type="protein sequence ID" value="CAC37095.1"/>
    <property type="molecule type" value="Genomic_DNA"/>
</dbReference>
<dbReference type="RefSeq" id="NP_115848.1">
    <property type="nucleotide sequence ID" value="NC_002793.1"/>
</dbReference>
<dbReference type="SMR" id="Q956S6"/>
<dbReference type="GeneID" id="803346"/>
<dbReference type="CTD" id="4519"/>
<dbReference type="GO" id="GO:0005743">
    <property type="term" value="C:mitochondrial inner membrane"/>
    <property type="evidence" value="ECO:0007669"/>
    <property type="project" value="UniProtKB-SubCell"/>
</dbReference>
<dbReference type="GO" id="GO:0045275">
    <property type="term" value="C:respiratory chain complex III"/>
    <property type="evidence" value="ECO:0007669"/>
    <property type="project" value="InterPro"/>
</dbReference>
<dbReference type="GO" id="GO:0046872">
    <property type="term" value="F:metal ion binding"/>
    <property type="evidence" value="ECO:0007669"/>
    <property type="project" value="UniProtKB-KW"/>
</dbReference>
<dbReference type="GO" id="GO:0008121">
    <property type="term" value="F:ubiquinol-cytochrome-c reductase activity"/>
    <property type="evidence" value="ECO:0007669"/>
    <property type="project" value="InterPro"/>
</dbReference>
<dbReference type="GO" id="GO:0006122">
    <property type="term" value="P:mitochondrial electron transport, ubiquinol to cytochrome c"/>
    <property type="evidence" value="ECO:0007669"/>
    <property type="project" value="TreeGrafter"/>
</dbReference>
<dbReference type="CDD" id="cd00290">
    <property type="entry name" value="cytochrome_b_C"/>
    <property type="match status" value="1"/>
</dbReference>
<dbReference type="CDD" id="cd00284">
    <property type="entry name" value="Cytochrome_b_N"/>
    <property type="match status" value="1"/>
</dbReference>
<dbReference type="FunFam" id="1.20.810.10:FF:000002">
    <property type="entry name" value="Cytochrome b"/>
    <property type="match status" value="1"/>
</dbReference>
<dbReference type="Gene3D" id="1.20.810.10">
    <property type="entry name" value="Cytochrome Bc1 Complex, Chain C"/>
    <property type="match status" value="1"/>
</dbReference>
<dbReference type="InterPro" id="IPR005798">
    <property type="entry name" value="Cyt_b/b6_C"/>
</dbReference>
<dbReference type="InterPro" id="IPR036150">
    <property type="entry name" value="Cyt_b/b6_C_sf"/>
</dbReference>
<dbReference type="InterPro" id="IPR005797">
    <property type="entry name" value="Cyt_b/b6_N"/>
</dbReference>
<dbReference type="InterPro" id="IPR027387">
    <property type="entry name" value="Cytb/b6-like_sf"/>
</dbReference>
<dbReference type="InterPro" id="IPR030689">
    <property type="entry name" value="Cytochrome_b"/>
</dbReference>
<dbReference type="InterPro" id="IPR048260">
    <property type="entry name" value="Cytochrome_b_C_euk/bac"/>
</dbReference>
<dbReference type="InterPro" id="IPR048259">
    <property type="entry name" value="Cytochrome_b_N_euk/bac"/>
</dbReference>
<dbReference type="InterPro" id="IPR016174">
    <property type="entry name" value="Di-haem_cyt_TM"/>
</dbReference>
<dbReference type="PANTHER" id="PTHR19271">
    <property type="entry name" value="CYTOCHROME B"/>
    <property type="match status" value="1"/>
</dbReference>
<dbReference type="PANTHER" id="PTHR19271:SF16">
    <property type="entry name" value="CYTOCHROME B"/>
    <property type="match status" value="1"/>
</dbReference>
<dbReference type="Pfam" id="PF00032">
    <property type="entry name" value="Cytochrom_B_C"/>
    <property type="match status" value="1"/>
</dbReference>
<dbReference type="Pfam" id="PF00033">
    <property type="entry name" value="Cytochrome_B"/>
    <property type="match status" value="1"/>
</dbReference>
<dbReference type="PIRSF" id="PIRSF038885">
    <property type="entry name" value="COB"/>
    <property type="match status" value="1"/>
</dbReference>
<dbReference type="SUPFAM" id="SSF81648">
    <property type="entry name" value="a domain/subunit of cytochrome bc1 complex (Ubiquinol-cytochrome c reductase)"/>
    <property type="match status" value="1"/>
</dbReference>
<dbReference type="SUPFAM" id="SSF81342">
    <property type="entry name" value="Transmembrane di-heme cytochromes"/>
    <property type="match status" value="1"/>
</dbReference>
<dbReference type="PROSITE" id="PS51003">
    <property type="entry name" value="CYTB_CTER"/>
    <property type="match status" value="1"/>
</dbReference>
<dbReference type="PROSITE" id="PS51002">
    <property type="entry name" value="CYTB_NTER"/>
    <property type="match status" value="1"/>
</dbReference>
<comment type="function">
    <text evidence="2">Component of the ubiquinol-cytochrome c reductase complex (complex III or cytochrome b-c1 complex) that is part of the mitochondrial respiratory chain. The b-c1 complex mediates electron transfer from ubiquinol to cytochrome c. Contributes to the generation of a proton gradient across the mitochondrial membrane that is then used for ATP synthesis.</text>
</comment>
<comment type="cofactor">
    <cofactor evidence="2">
        <name>heme b</name>
        <dbReference type="ChEBI" id="CHEBI:60344"/>
    </cofactor>
    <text evidence="2">Binds 2 heme b groups non-covalently.</text>
</comment>
<comment type="subunit">
    <text evidence="2">The cytochrome bc1 complex contains 3 respiratory subunits (MT-CYB, CYC1 and UQCRFS1), 2 core proteins (UQCRC1 and UQCRC2) and probably 6 low-molecular weight proteins.</text>
</comment>
<comment type="subcellular location">
    <subcellularLocation>
        <location evidence="2">Mitochondrion inner membrane</location>
        <topology evidence="2">Multi-pass membrane protein</topology>
    </subcellularLocation>
</comment>
<comment type="miscellaneous">
    <text evidence="1">Heme 1 (or BL or b562) is low-potential and absorbs at about 562 nm, and heme 2 (or BH or b566) is high-potential and absorbs at about 566 nm.</text>
</comment>
<comment type="similarity">
    <text evidence="3 4">Belongs to the cytochrome b family.</text>
</comment>
<comment type="caution">
    <text evidence="2">The full-length protein contains only eight transmembrane helices, not nine as predicted by bioinformatics tools.</text>
</comment>
<protein>
    <recommendedName>
        <fullName>Cytochrome b</fullName>
    </recommendedName>
    <alternativeName>
        <fullName>Complex III subunit 3</fullName>
    </alternativeName>
    <alternativeName>
        <fullName>Complex III subunit III</fullName>
    </alternativeName>
    <alternativeName>
        <fullName>Cytochrome b-c1 complex subunit 3</fullName>
    </alternativeName>
    <alternativeName>
        <fullName>Ubiquinol-cytochrome-c reductase complex cytochrome b subunit</fullName>
    </alternativeName>
</protein>
<name>CYB_IGUIG</name>
<gene>
    <name type="primary">MT-CYB</name>
    <name type="synonym">COB</name>
    <name type="synonym">CYTB</name>
    <name type="synonym">MTCYB</name>
</gene>